<gene>
    <name evidence="1" type="primary">fliE</name>
    <name type="ordered locus">Rleg2_0319</name>
</gene>
<dbReference type="EMBL" id="CP001191">
    <property type="protein sequence ID" value="ACI53618.1"/>
    <property type="molecule type" value="Genomic_DNA"/>
</dbReference>
<dbReference type="RefSeq" id="WP_003588549.1">
    <property type="nucleotide sequence ID" value="NC_011369.1"/>
</dbReference>
<dbReference type="SMR" id="B5ZQD7"/>
<dbReference type="STRING" id="395492.Rleg2_0319"/>
<dbReference type="KEGG" id="rlt:Rleg2_0319"/>
<dbReference type="eggNOG" id="COG1677">
    <property type="taxonomic scope" value="Bacteria"/>
</dbReference>
<dbReference type="HOGENOM" id="CLU_147249_2_0_5"/>
<dbReference type="Proteomes" id="UP000008330">
    <property type="component" value="Chromosome"/>
</dbReference>
<dbReference type="GO" id="GO:0009425">
    <property type="term" value="C:bacterial-type flagellum basal body"/>
    <property type="evidence" value="ECO:0007669"/>
    <property type="project" value="UniProtKB-SubCell"/>
</dbReference>
<dbReference type="GO" id="GO:0003774">
    <property type="term" value="F:cytoskeletal motor activity"/>
    <property type="evidence" value="ECO:0007669"/>
    <property type="project" value="InterPro"/>
</dbReference>
<dbReference type="GO" id="GO:0005198">
    <property type="term" value="F:structural molecule activity"/>
    <property type="evidence" value="ECO:0007669"/>
    <property type="project" value="InterPro"/>
</dbReference>
<dbReference type="GO" id="GO:0071973">
    <property type="term" value="P:bacterial-type flagellum-dependent cell motility"/>
    <property type="evidence" value="ECO:0007669"/>
    <property type="project" value="InterPro"/>
</dbReference>
<dbReference type="HAMAP" id="MF_00724">
    <property type="entry name" value="FliE"/>
    <property type="match status" value="1"/>
</dbReference>
<dbReference type="InterPro" id="IPR001624">
    <property type="entry name" value="FliE"/>
</dbReference>
<dbReference type="Pfam" id="PF02049">
    <property type="entry name" value="FliE"/>
    <property type="match status" value="1"/>
</dbReference>
<reference key="1">
    <citation type="journal article" date="2010" name="Stand. Genomic Sci.">
        <title>Complete genome sequence of Rhizobium leguminosarum bv trifolii strain WSM2304, an effective microsymbiont of the South American clover Trifolium polymorphum.</title>
        <authorList>
            <person name="Reeve W."/>
            <person name="O'Hara G."/>
            <person name="Chain P."/>
            <person name="Ardley J."/>
            <person name="Brau L."/>
            <person name="Nandesena K."/>
            <person name="Tiwari R."/>
            <person name="Malfatti S."/>
            <person name="Kiss H."/>
            <person name="Lapidus A."/>
            <person name="Copeland A."/>
            <person name="Nolan M."/>
            <person name="Land M."/>
            <person name="Ivanova N."/>
            <person name="Mavromatis K."/>
            <person name="Markowitz V."/>
            <person name="Kyrpides N."/>
            <person name="Melino V."/>
            <person name="Denton M."/>
            <person name="Yates R."/>
            <person name="Howieson J."/>
        </authorList>
    </citation>
    <scope>NUCLEOTIDE SEQUENCE [LARGE SCALE GENOMIC DNA]</scope>
    <source>
        <strain>WSM2304</strain>
    </source>
</reference>
<protein>
    <recommendedName>
        <fullName evidence="1">Flagellar hook-basal body complex protein FliE</fullName>
    </recommendedName>
</protein>
<keyword id="KW-0975">Bacterial flagellum</keyword>
<keyword id="KW-1185">Reference proteome</keyword>
<proteinExistence type="inferred from homology"/>
<evidence type="ECO:0000255" key="1">
    <source>
        <dbReference type="HAMAP-Rule" id="MF_00724"/>
    </source>
</evidence>
<comment type="subcellular location">
    <subcellularLocation>
        <location evidence="1">Bacterial flagellum basal body</location>
    </subcellularLocation>
</comment>
<comment type="similarity">
    <text evidence="1">Belongs to the FliE family.</text>
</comment>
<sequence>MISSVQNVSNLSMTRALGAVDTENSASSSAATMPGTAGAANNMSFASVMGNMASDAVSSLKGAESMSFAGIKGTATTREVVDSMLQAEQTLQTAIAIRDKVVSAFLEVTKMQM</sequence>
<accession>B5ZQD7</accession>
<name>FLIE_RHILW</name>
<organism>
    <name type="scientific">Rhizobium leguminosarum bv. trifolii (strain WSM2304)</name>
    <dbReference type="NCBI Taxonomy" id="395492"/>
    <lineage>
        <taxon>Bacteria</taxon>
        <taxon>Pseudomonadati</taxon>
        <taxon>Pseudomonadota</taxon>
        <taxon>Alphaproteobacteria</taxon>
        <taxon>Hyphomicrobiales</taxon>
        <taxon>Rhizobiaceae</taxon>
        <taxon>Rhizobium/Agrobacterium group</taxon>
        <taxon>Rhizobium</taxon>
    </lineage>
</organism>
<feature type="chain" id="PRO_1000132668" description="Flagellar hook-basal body complex protein FliE">
    <location>
        <begin position="1"/>
        <end position="113"/>
    </location>
</feature>